<gene>
    <name evidence="1" type="primary">rimP</name>
    <name type="ordered locus">Mflv_4042</name>
</gene>
<reference key="1">
    <citation type="submission" date="2007-04" db="EMBL/GenBank/DDBJ databases">
        <title>Complete sequence of chromosome of Mycobacterium gilvum PYR-GCK.</title>
        <authorList>
            <consortium name="US DOE Joint Genome Institute"/>
            <person name="Copeland A."/>
            <person name="Lucas S."/>
            <person name="Lapidus A."/>
            <person name="Barry K."/>
            <person name="Detter J.C."/>
            <person name="Glavina del Rio T."/>
            <person name="Hammon N."/>
            <person name="Israni S."/>
            <person name="Dalin E."/>
            <person name="Tice H."/>
            <person name="Pitluck S."/>
            <person name="Chain P."/>
            <person name="Malfatti S."/>
            <person name="Shin M."/>
            <person name="Vergez L."/>
            <person name="Schmutz J."/>
            <person name="Larimer F."/>
            <person name="Land M."/>
            <person name="Hauser L."/>
            <person name="Kyrpides N."/>
            <person name="Mikhailova N."/>
            <person name="Miller C."/>
            <person name="Richardson P."/>
        </authorList>
    </citation>
    <scope>NUCLEOTIDE SEQUENCE [LARGE SCALE GENOMIC DNA]</scope>
    <source>
        <strain>PYR-GCK</strain>
    </source>
</reference>
<accession>A4TCF3</accession>
<keyword id="KW-0963">Cytoplasm</keyword>
<keyword id="KW-0690">Ribosome biogenesis</keyword>
<organism>
    <name type="scientific">Mycolicibacterium gilvum (strain PYR-GCK)</name>
    <name type="common">Mycobacterium gilvum (strain PYR-GCK)</name>
    <dbReference type="NCBI Taxonomy" id="350054"/>
    <lineage>
        <taxon>Bacteria</taxon>
        <taxon>Bacillati</taxon>
        <taxon>Actinomycetota</taxon>
        <taxon>Actinomycetes</taxon>
        <taxon>Mycobacteriales</taxon>
        <taxon>Mycobacteriaceae</taxon>
        <taxon>Mycolicibacterium</taxon>
    </lineage>
</organism>
<proteinExistence type="inferred from homology"/>
<sequence>MAERSTDFRPGLPSQRQVVELLDGEFARAGYDIEDVVIDAATRPPRIVVIADGDRGLDLDAVAELSRLASEQLDTLDTPPYVLEVTSPGVDRPLTEEKHYRRAQGRLAEVTLADGSTLTGRIGAVQNATVALVVREARSNLTVRDIALDAVVKAVVQVEFSPPSPRELELAGVSGKET</sequence>
<protein>
    <recommendedName>
        <fullName evidence="1">Ribosome maturation factor RimP</fullName>
    </recommendedName>
</protein>
<feature type="chain" id="PRO_0000384709" description="Ribosome maturation factor RimP">
    <location>
        <begin position="1"/>
        <end position="178"/>
    </location>
</feature>
<name>RIMP_MYCGI</name>
<comment type="function">
    <text evidence="1">Required for maturation of 30S ribosomal subunits.</text>
</comment>
<comment type="subcellular location">
    <subcellularLocation>
        <location evidence="1">Cytoplasm</location>
    </subcellularLocation>
</comment>
<comment type="similarity">
    <text evidence="1">Belongs to the RimP family.</text>
</comment>
<evidence type="ECO:0000255" key="1">
    <source>
        <dbReference type="HAMAP-Rule" id="MF_01077"/>
    </source>
</evidence>
<dbReference type="EMBL" id="CP000656">
    <property type="protein sequence ID" value="ABP46512.1"/>
    <property type="molecule type" value="Genomic_DNA"/>
</dbReference>
<dbReference type="SMR" id="A4TCF3"/>
<dbReference type="STRING" id="350054.Mflv_4042"/>
<dbReference type="KEGG" id="mgi:Mflv_4042"/>
<dbReference type="eggNOG" id="COG0779">
    <property type="taxonomic scope" value="Bacteria"/>
</dbReference>
<dbReference type="HOGENOM" id="CLU_070525_3_0_11"/>
<dbReference type="OrthoDB" id="9805006at2"/>
<dbReference type="GO" id="GO:0005829">
    <property type="term" value="C:cytosol"/>
    <property type="evidence" value="ECO:0007669"/>
    <property type="project" value="TreeGrafter"/>
</dbReference>
<dbReference type="GO" id="GO:0000028">
    <property type="term" value="P:ribosomal small subunit assembly"/>
    <property type="evidence" value="ECO:0007669"/>
    <property type="project" value="TreeGrafter"/>
</dbReference>
<dbReference type="GO" id="GO:0006412">
    <property type="term" value="P:translation"/>
    <property type="evidence" value="ECO:0007669"/>
    <property type="project" value="TreeGrafter"/>
</dbReference>
<dbReference type="CDD" id="cd01734">
    <property type="entry name" value="YlxS_C"/>
    <property type="match status" value="1"/>
</dbReference>
<dbReference type="Gene3D" id="3.30.300.70">
    <property type="entry name" value="RimP-like superfamily, N-terminal"/>
    <property type="match status" value="1"/>
</dbReference>
<dbReference type="HAMAP" id="MF_01077">
    <property type="entry name" value="RimP"/>
    <property type="match status" value="1"/>
</dbReference>
<dbReference type="InterPro" id="IPR003728">
    <property type="entry name" value="Ribosome_maturation_RimP"/>
</dbReference>
<dbReference type="InterPro" id="IPR028998">
    <property type="entry name" value="RimP_C"/>
</dbReference>
<dbReference type="InterPro" id="IPR028989">
    <property type="entry name" value="RimP_N"/>
</dbReference>
<dbReference type="InterPro" id="IPR035956">
    <property type="entry name" value="RimP_N_sf"/>
</dbReference>
<dbReference type="NCBIfam" id="NF000930">
    <property type="entry name" value="PRK00092.2-2"/>
    <property type="match status" value="1"/>
</dbReference>
<dbReference type="PANTHER" id="PTHR33867">
    <property type="entry name" value="RIBOSOME MATURATION FACTOR RIMP"/>
    <property type="match status" value="1"/>
</dbReference>
<dbReference type="PANTHER" id="PTHR33867:SF1">
    <property type="entry name" value="RIBOSOME MATURATION FACTOR RIMP"/>
    <property type="match status" value="1"/>
</dbReference>
<dbReference type="Pfam" id="PF17384">
    <property type="entry name" value="DUF150_C"/>
    <property type="match status" value="1"/>
</dbReference>
<dbReference type="Pfam" id="PF02576">
    <property type="entry name" value="RimP_N"/>
    <property type="match status" value="1"/>
</dbReference>
<dbReference type="SUPFAM" id="SSF75420">
    <property type="entry name" value="YhbC-like, N-terminal domain"/>
    <property type="match status" value="1"/>
</dbReference>